<gene>
    <name type="primary">RpL32</name>
</gene>
<protein>
    <recommendedName>
        <fullName evidence="1">Large ribosomal subunit protein eL32</fullName>
    </recommendedName>
    <alternativeName>
        <fullName>60S ribosomal protein L32</fullName>
    </alternativeName>
</protein>
<proteinExistence type="evidence at transcript level"/>
<accession>Q962T1</accession>
<organism>
    <name type="scientific">Spodoptera frugiperda</name>
    <name type="common">Fall armyworm</name>
    <dbReference type="NCBI Taxonomy" id="7108"/>
    <lineage>
        <taxon>Eukaryota</taxon>
        <taxon>Metazoa</taxon>
        <taxon>Ecdysozoa</taxon>
        <taxon>Arthropoda</taxon>
        <taxon>Hexapoda</taxon>
        <taxon>Insecta</taxon>
        <taxon>Pterygota</taxon>
        <taxon>Neoptera</taxon>
        <taxon>Endopterygota</taxon>
        <taxon>Lepidoptera</taxon>
        <taxon>Glossata</taxon>
        <taxon>Ditrysia</taxon>
        <taxon>Noctuoidea</taxon>
        <taxon>Noctuidae</taxon>
        <taxon>Amphipyrinae</taxon>
        <taxon>Spodoptera</taxon>
    </lineage>
</organism>
<comment type="similarity">
    <text evidence="1">Belongs to the eukaryotic ribosomal protein eL32 family.</text>
</comment>
<name>RL32_SPOFR</name>
<dbReference type="EMBL" id="AF400195">
    <property type="protein sequence ID" value="AAK92167.1"/>
    <property type="molecule type" value="mRNA"/>
</dbReference>
<dbReference type="SMR" id="Q962T1"/>
<dbReference type="EnsemblMetazoa" id="XM_035597771.2">
    <property type="protein sequence ID" value="XP_035453664.1"/>
    <property type="gene ID" value="LOC118278529"/>
</dbReference>
<dbReference type="EnsemblMetazoa" id="XM_050703815.1">
    <property type="protein sequence ID" value="XP_050559772.1"/>
    <property type="gene ID" value="LOC118278529"/>
</dbReference>
<dbReference type="OrthoDB" id="268693at2759"/>
<dbReference type="Proteomes" id="UP000829999">
    <property type="component" value="Unplaced"/>
</dbReference>
<dbReference type="GO" id="GO:0022625">
    <property type="term" value="C:cytosolic large ribosomal subunit"/>
    <property type="evidence" value="ECO:0007669"/>
    <property type="project" value="TreeGrafter"/>
</dbReference>
<dbReference type="GO" id="GO:0003735">
    <property type="term" value="F:structural constituent of ribosome"/>
    <property type="evidence" value="ECO:0007669"/>
    <property type="project" value="InterPro"/>
</dbReference>
<dbReference type="GO" id="GO:0006412">
    <property type="term" value="P:translation"/>
    <property type="evidence" value="ECO:0007669"/>
    <property type="project" value="InterPro"/>
</dbReference>
<dbReference type="CDD" id="cd00513">
    <property type="entry name" value="Ribosomal_L32_L32e"/>
    <property type="match status" value="1"/>
</dbReference>
<dbReference type="InterPro" id="IPR001515">
    <property type="entry name" value="Ribosomal_eL32"/>
</dbReference>
<dbReference type="InterPro" id="IPR018263">
    <property type="entry name" value="Ribosomal_eL32_CS"/>
</dbReference>
<dbReference type="InterPro" id="IPR036351">
    <property type="entry name" value="Ribosomal_eL32_sf"/>
</dbReference>
<dbReference type="PANTHER" id="PTHR23413">
    <property type="entry name" value="60S RIBOSOMAL PROTEIN L32 AND DNA-DIRECTED RNA POLYMERASE II, SUBUNIT N"/>
    <property type="match status" value="1"/>
</dbReference>
<dbReference type="PANTHER" id="PTHR23413:SF1">
    <property type="entry name" value="RIBOSOMAL PROTEIN L32"/>
    <property type="match status" value="1"/>
</dbReference>
<dbReference type="Pfam" id="PF01655">
    <property type="entry name" value="Ribosomal_L32e"/>
    <property type="match status" value="1"/>
</dbReference>
<dbReference type="SMART" id="SM01393">
    <property type="entry name" value="Ribosomal_L32e"/>
    <property type="match status" value="1"/>
</dbReference>
<dbReference type="SUPFAM" id="SSF52042">
    <property type="entry name" value="Ribosomal protein L32e"/>
    <property type="match status" value="1"/>
</dbReference>
<dbReference type="PROSITE" id="PS00580">
    <property type="entry name" value="RIBOSOMAL_L32E"/>
    <property type="match status" value="1"/>
</dbReference>
<feature type="chain" id="PRO_0000131135" description="Large ribosomal subunit protein eL32">
    <location>
        <begin position="1"/>
        <end position="134"/>
    </location>
</feature>
<sequence length="134" mass="16101">MAIRPVYRPTIVKKRTKRFIRHQSDRYDKLKRNWRKPRGIDNRVRRRFKGQYLMPNIGYGSNKKTRHMLPNGFRKVLVHNVRELEILMMQNRKYCAEIAHGVSSKKRKTIVERAQQLSIRVTNSAARLRSQENE</sequence>
<keyword id="KW-0687">Ribonucleoprotein</keyword>
<keyword id="KW-0689">Ribosomal protein</keyword>
<reference key="1">
    <citation type="journal article" date="2003" name="Bioinformatics">
        <title>Annotation pattern of ESTs from Spodoptera frugiperda Sf9 cells and analysis of the ribosomal protein genes reveal insect-specific features and unexpectedly low codon usage bias.</title>
        <authorList>
            <person name="Landais I."/>
            <person name="Ogliastro M."/>
            <person name="Mita K."/>
            <person name="Nohata J."/>
            <person name="Lopez-Ferber M."/>
            <person name="Duonor-Cerutti M."/>
            <person name="Shimada T."/>
            <person name="Fournier P."/>
            <person name="Devauchelle G."/>
        </authorList>
    </citation>
    <scope>NUCLEOTIDE SEQUENCE [LARGE SCALE MRNA]</scope>
</reference>
<evidence type="ECO:0000305" key="1"/>